<protein>
    <recommendedName>
        <fullName>Light-induced protein, chloroplastic</fullName>
    </recommendedName>
    <alternativeName>
        <fullName>C40.4</fullName>
    </alternativeName>
</protein>
<sequence>MASISSLNQIPCKTLQITSQYSKPTSKISTLPISSTNFLSKTEQHRSISVKEFTNPKPKFTAQATNYDKEDEWGPEVEQIRPGGVAVVEEEPPKEPSEIELLKKQLADSLYGTNRGLSASSETRAEIVELITQLESKNPNPAPTEALTLLNGKWILAYTSFSGLFPLLSRGNLPLVRVEEISQTIDSESFTVQNSVVFAGPLATTSISTNAKFEVRSPKRVQIKFEEGIIGTPQLTDSIVLPENVEFLGQKIDVSPFKGLITSVQDTASSVVKSISSQPPIKFPITNNNAQSWLLTTYLDDELRIPRGDAGSVFVLIKEGSPLLKP</sequence>
<dbReference type="EMBL" id="AJ131455">
    <property type="protein sequence ID" value="CAA10372.1"/>
    <property type="molecule type" value="mRNA"/>
</dbReference>
<dbReference type="SMR" id="O99019"/>
<dbReference type="GO" id="GO:0009535">
    <property type="term" value="C:chloroplast thylakoid membrane"/>
    <property type="evidence" value="ECO:0000250"/>
    <property type="project" value="UniProtKB"/>
</dbReference>
<dbReference type="GO" id="GO:0071482">
    <property type="term" value="P:cellular response to light stimulus"/>
    <property type="evidence" value="ECO:0000270"/>
    <property type="project" value="UniProtKB"/>
</dbReference>
<dbReference type="InterPro" id="IPR039633">
    <property type="entry name" value="PAP"/>
</dbReference>
<dbReference type="InterPro" id="IPR006843">
    <property type="entry name" value="PAP/fibrillin_dom"/>
</dbReference>
<dbReference type="PANTHER" id="PTHR31906">
    <property type="entry name" value="PLASTID-LIPID-ASSOCIATED PROTEIN 4, CHLOROPLASTIC-RELATED"/>
    <property type="match status" value="1"/>
</dbReference>
<dbReference type="Pfam" id="PF04755">
    <property type="entry name" value="PAP_fibrillin"/>
    <property type="match status" value="1"/>
</dbReference>
<reference evidence="4" key="1">
    <citation type="journal article" date="1999" name="Plant J.">
        <title>Leaf C40.4: a carotenoid-associated protein involved in the modulation of photosynthetic efficiency?</title>
        <authorList>
            <person name="Monte E."/>
            <person name="Ludevid D."/>
            <person name="Prat S."/>
        </authorList>
    </citation>
    <scope>NUCLEOTIDE SEQUENCE [MRNA]</scope>
    <scope>FUNCTION</scope>
    <scope>SUBCELLULAR LOCATION</scope>
    <scope>SUBUNIT</scope>
    <scope>TISSUE SPECIFICITY</scope>
    <scope>INDUCTION</scope>
    <source>
        <tissue>Leaf</tissue>
    </source>
</reference>
<accession>O99019</accession>
<evidence type="ECO:0000250" key="1"/>
<evidence type="ECO:0000250" key="2">
    <source>
        <dbReference type="UniProtKB" id="P80471"/>
    </source>
</evidence>
<evidence type="ECO:0000269" key="3">
    <source>
    </source>
</evidence>
<evidence type="ECO:0000305" key="4"/>
<evidence type="ECO:0000312" key="5">
    <source>
        <dbReference type="EMBL" id="CAA10372.1"/>
    </source>
</evidence>
<keyword id="KW-0150">Chloroplast</keyword>
<keyword id="KW-0472">Membrane</keyword>
<keyword id="KW-0934">Plastid</keyword>
<keyword id="KW-0793">Thylakoid</keyword>
<keyword id="KW-0809">Transit peptide</keyword>
<feature type="transit peptide" description="Chloroplast" evidence="1">
    <location>
        <begin position="1"/>
        <end position="63"/>
    </location>
</feature>
<feature type="chain" id="PRO_0000021597" description="Light-induced protein, chloroplastic">
    <location>
        <begin position="64"/>
        <end position="326"/>
    </location>
</feature>
<comment type="function">
    <text evidence="2 3">Required for normal plant growth. May be both photoprotective and play an ancillary role in photosynthesis. May structurally stabilize thylakoids during osmotic and oxidative stress.</text>
</comment>
<comment type="subunit">
    <text evidence="3">Associates with the major light-harvesting antenna complex polypeptides of the PSII oxygen-evolving complex.</text>
</comment>
<comment type="subcellular location">
    <subcellularLocation>
        <location evidence="2 3">Plastid</location>
        <location evidence="2 3">Chloroplast thylakoid membrane</location>
    </subcellularLocation>
</comment>
<comment type="tissue specificity">
    <text evidence="3">Expressed at high levels in leaves and in the petals and anthers of flowers.</text>
</comment>
<comment type="developmental stage">
    <text>Up-regulated in the leaves during tuberization.</text>
</comment>
<comment type="induction">
    <text evidence="3">By light. Levels increase upon illumination and stay high in daylight, dropping back to basal levels in darkness.</text>
</comment>
<comment type="similarity">
    <text evidence="4">Belongs to the LIPC family.</text>
</comment>
<proteinExistence type="evidence at protein level"/>
<name>LIPC_SOLDE</name>
<organism evidence="5">
    <name type="scientific">Solanum demissum</name>
    <name type="common">Wild potato</name>
    <dbReference type="NCBI Taxonomy" id="50514"/>
    <lineage>
        <taxon>Eukaryota</taxon>
        <taxon>Viridiplantae</taxon>
        <taxon>Streptophyta</taxon>
        <taxon>Embryophyta</taxon>
        <taxon>Tracheophyta</taxon>
        <taxon>Spermatophyta</taxon>
        <taxon>Magnoliopsida</taxon>
        <taxon>eudicotyledons</taxon>
        <taxon>Gunneridae</taxon>
        <taxon>Pentapetalae</taxon>
        <taxon>asterids</taxon>
        <taxon>lamiids</taxon>
        <taxon>Solanales</taxon>
        <taxon>Solanaceae</taxon>
        <taxon>Solanoideae</taxon>
        <taxon>Solaneae</taxon>
        <taxon>Solanum</taxon>
    </lineage>
</organism>